<dbReference type="EMBL" id="AJ564072">
    <property type="protein sequence ID" value="CAD91856.1"/>
    <property type="molecule type" value="Genomic_DNA"/>
</dbReference>
<dbReference type="EMBL" id="AJ564073">
    <property type="protein sequence ID" value="CAD91857.1"/>
    <property type="molecule type" value="Genomic_DNA"/>
</dbReference>
<dbReference type="EMBL" id="AJ564074">
    <property type="protein sequence ID" value="CAD91858.1"/>
    <property type="molecule type" value="Genomic_DNA"/>
</dbReference>
<dbReference type="EMBL" id="AJ564075">
    <property type="protein sequence ID" value="CAD91859.1"/>
    <property type="molecule type" value="Genomic_DNA"/>
</dbReference>
<dbReference type="EMBL" id="AJ564076">
    <property type="protein sequence ID" value="CAD91860.1"/>
    <property type="molecule type" value="Genomic_DNA"/>
</dbReference>
<dbReference type="EMBL" id="AJ564077">
    <property type="protein sequence ID" value="CAD91861.1"/>
    <property type="molecule type" value="Genomic_DNA"/>
</dbReference>
<dbReference type="EMBL" id="AJ564078">
    <property type="protein sequence ID" value="CAD91862.1"/>
    <property type="molecule type" value="Genomic_DNA"/>
</dbReference>
<dbReference type="EMBL" id="AJ564079">
    <property type="protein sequence ID" value="CAD91863.1"/>
    <property type="molecule type" value="Genomic_DNA"/>
</dbReference>
<dbReference type="EMBL" id="AJ564080">
    <property type="protein sequence ID" value="CAD91864.1"/>
    <property type="molecule type" value="Genomic_DNA"/>
</dbReference>
<dbReference type="EMBL" id="AJ564081">
    <property type="protein sequence ID" value="CAD91865.1"/>
    <property type="molecule type" value="Genomic_DNA"/>
</dbReference>
<dbReference type="EMBL" id="AJ564082">
    <property type="protein sequence ID" value="CAD91866.1"/>
    <property type="molecule type" value="Genomic_DNA"/>
</dbReference>
<dbReference type="EMBL" id="AJ564083">
    <property type="protein sequence ID" value="CAD91867.1"/>
    <property type="molecule type" value="Genomic_DNA"/>
</dbReference>
<dbReference type="EMBL" id="AJ564084">
    <property type="protein sequence ID" value="CAD91868.1"/>
    <property type="molecule type" value="Genomic_DNA"/>
</dbReference>
<dbReference type="EMBL" id="AJ564085">
    <property type="protein sequence ID" value="CAD91869.1"/>
    <property type="molecule type" value="Genomic_DNA"/>
</dbReference>
<dbReference type="EMBL" id="AJ564086">
    <property type="protein sequence ID" value="CAD91870.1"/>
    <property type="molecule type" value="Genomic_DNA"/>
</dbReference>
<dbReference type="EMBL" id="AJ564087">
    <property type="protein sequence ID" value="CAD91871.1"/>
    <property type="molecule type" value="Genomic_DNA"/>
</dbReference>
<dbReference type="EMBL" id="AJ564088">
    <property type="protein sequence ID" value="CAD91872.1"/>
    <property type="molecule type" value="Genomic_DNA"/>
</dbReference>
<dbReference type="EMBL" id="AJ564089">
    <property type="protein sequence ID" value="CAD91873.1"/>
    <property type="molecule type" value="Genomic_DNA"/>
</dbReference>
<dbReference type="EMBL" id="AJ564090">
    <property type="protein sequence ID" value="CAD91874.1"/>
    <property type="molecule type" value="Genomic_DNA"/>
</dbReference>
<dbReference type="EMBL" id="AJ564091">
    <property type="protein sequence ID" value="CAD91875.1"/>
    <property type="molecule type" value="Genomic_DNA"/>
</dbReference>
<dbReference type="EMBL" id="AJ564092">
    <property type="protein sequence ID" value="CAD91876.1"/>
    <property type="molecule type" value="Genomic_DNA"/>
</dbReference>
<dbReference type="EMBL" id="AJ564093">
    <property type="protein sequence ID" value="CAD91877.1"/>
    <property type="molecule type" value="Genomic_DNA"/>
</dbReference>
<dbReference type="EMBL" id="AJ564094">
    <property type="protein sequence ID" value="CAD91878.1"/>
    <property type="molecule type" value="Genomic_DNA"/>
</dbReference>
<dbReference type="EMBL" id="AJ564095">
    <property type="protein sequence ID" value="CAD91879.1"/>
    <property type="molecule type" value="Genomic_DNA"/>
</dbReference>
<dbReference type="EMBL" id="AJ564096">
    <property type="protein sequence ID" value="CAD91880.1"/>
    <property type="molecule type" value="Genomic_DNA"/>
</dbReference>
<dbReference type="EMBL" id="AJ564097">
    <property type="protein sequence ID" value="CAD91881.1"/>
    <property type="molecule type" value="Genomic_DNA"/>
</dbReference>
<dbReference type="EMBL" id="AJ564098">
    <property type="protein sequence ID" value="CAD91882.1"/>
    <property type="molecule type" value="Genomic_DNA"/>
</dbReference>
<dbReference type="EMBL" id="AJ564099">
    <property type="protein sequence ID" value="CAD91883.1"/>
    <property type="molecule type" value="Genomic_DNA"/>
</dbReference>
<dbReference type="EMBL" id="AJ564100">
    <property type="protein sequence ID" value="CAD91884.1"/>
    <property type="molecule type" value="Genomic_DNA"/>
</dbReference>
<dbReference type="EMBL" id="AJ564101">
    <property type="protein sequence ID" value="CAD91885.1"/>
    <property type="molecule type" value="Genomic_DNA"/>
</dbReference>
<dbReference type="RefSeq" id="WP_001803492.1">
    <property type="nucleotide sequence ID" value="NZ_BECK01000002.1"/>
</dbReference>
<dbReference type="SMR" id="P0C5Z9"/>
<dbReference type="GO" id="GO:0005737">
    <property type="term" value="C:cytoplasm"/>
    <property type="evidence" value="ECO:0007669"/>
    <property type="project" value="UniProtKB-SubCell"/>
</dbReference>
<dbReference type="Gene3D" id="3.40.30.10">
    <property type="entry name" value="Glutaredoxin"/>
    <property type="match status" value="1"/>
</dbReference>
<dbReference type="HAMAP" id="MF_02245">
    <property type="entry name" value="Adapter_SpxH"/>
    <property type="match status" value="1"/>
</dbReference>
<dbReference type="InterPro" id="IPR046404">
    <property type="entry name" value="Adapter_SpxH"/>
</dbReference>
<dbReference type="InterPro" id="IPR036249">
    <property type="entry name" value="Thioredoxin-like_sf"/>
</dbReference>
<dbReference type="PANTHER" id="PTHR13887:SF47">
    <property type="entry name" value="CLPXP ADAPTER PROTEIN SPXH"/>
    <property type="match status" value="1"/>
</dbReference>
<dbReference type="PANTHER" id="PTHR13887">
    <property type="entry name" value="GLUTATHIONE S-TRANSFERASE KAPPA"/>
    <property type="match status" value="1"/>
</dbReference>
<dbReference type="Pfam" id="PF13743">
    <property type="entry name" value="Thioredoxin_5"/>
    <property type="match status" value="1"/>
</dbReference>
<dbReference type="SUPFAM" id="SSF52833">
    <property type="entry name" value="Thioredoxin-like"/>
    <property type="match status" value="1"/>
</dbReference>
<comment type="function">
    <text evidence="1">Adapter protein required for efficient degradation of Spx by ClpXP under non-stress conditions. Interaction with Spx stabilizes Spx and exposes the C-terminus of Spx for recognition and proteolysis by ClpXP.</text>
</comment>
<comment type="subunit">
    <text evidence="1">Interacts with Spx.</text>
</comment>
<comment type="subcellular location">
    <subcellularLocation>
        <location evidence="1">Cytoplasm</location>
    </subcellularLocation>
</comment>
<comment type="similarity">
    <text evidence="1">Belongs to the SpxH family.</text>
</comment>
<sequence length="261" mass="30593">MENKSREDINLSPVSKIEIYSFFDPFSSDCFKLSAILSKLRIEYNQYIRIRHILNPSLKVLTKCQAQSTSNFDNIALAYKAAELQGRVRAERFIHLMQNEIIPKRDIITESMICDCIQNAGIDLEVFKDDLQKSKLTESLKIDLHIAREMEIEQAPSLVFFSEDVHEEGLKVEGLYPYHIYTYIINELMGKPIEKNLPPKLETYIQQQQLVTMEELLTIYEWPEKLLNKELKKLAIQQKIEKLKYPDGDFWKSKMPKIKSK</sequence>
<protein>
    <recommendedName>
        <fullName evidence="1">ClpXP adapter protein SpxH</fullName>
    </recommendedName>
</protein>
<keyword id="KW-0963">Cytoplasm</keyword>
<gene>
    <name evidence="1" type="primary">spxH</name>
</gene>
<reference key="1">
    <citation type="journal article" date="2004" name="J. Antimicrob. Chemother.">
        <title>Genetic analysis of 17 genes in Staphylococcus aureus with reduced susceptibility to vancomycin (VISA) and heteroVISA.</title>
        <authorList>
            <person name="Wootton M."/>
            <person name="Avison M.B."/>
            <person name="Bennett P.M."/>
            <person name="Howe R.A."/>
            <person name="MacGowan A.P."/>
            <person name="Walsh T.R."/>
        </authorList>
    </citation>
    <scope>NUCLEOTIDE SEQUENCE [GENOMIC DNA]</scope>
    <source>
        <strain>FranceDuf</strain>
        <strain>Glasgow3700</strain>
        <strain>Glasgow3759</strain>
        <strain>LIM1</strain>
        <strain>LIM2</strain>
        <strain>LIM3</strain>
        <strain>LiverpoolAG</strain>
        <strain>LLA</strain>
        <strain>LLE</strain>
        <strain>Michigan</strain>
        <strain>New Jersey</strain>
        <strain>Norway1018</strain>
        <strain>PC1</strain>
        <strain>PC3</strain>
        <strain>Slovenia6096</strain>
        <strain>SMH10501</strain>
        <strain>SMH11888</strain>
        <strain>SMH12248</strain>
        <strain>SMH14017</strain>
        <strain>SMH17487</strain>
        <strain>SMH17608</strain>
        <strain>SMH18000</strain>
        <strain>SMH18034</strain>
        <strain>SMH18037</strain>
        <strain>SMH2</strain>
        <strain>SMH8997</strain>
        <strain>Southampton23</strain>
        <strain>St. Luke</strain>
        <strain>Sweden307</strain>
        <strain>Sweden309</strain>
    </source>
</reference>
<proteinExistence type="inferred from homology"/>
<organism>
    <name type="scientific">Staphylococcus aureus</name>
    <dbReference type="NCBI Taxonomy" id="1280"/>
    <lineage>
        <taxon>Bacteria</taxon>
        <taxon>Bacillati</taxon>
        <taxon>Bacillota</taxon>
        <taxon>Bacilli</taxon>
        <taxon>Bacillales</taxon>
        <taxon>Staphylococcaceae</taxon>
        <taxon>Staphylococcus</taxon>
    </lineage>
</organism>
<feature type="chain" id="PRO_0000278696" description="ClpXP adapter protein SpxH">
    <location>
        <begin position="1" status="less than"/>
        <end position="261"/>
    </location>
</feature>
<feature type="non-terminal residue">
    <location>
        <position position="1"/>
    </location>
</feature>
<name>SPXH_STAAU</name>
<evidence type="ECO:0000255" key="1">
    <source>
        <dbReference type="HAMAP-Rule" id="MF_02245"/>
    </source>
</evidence>
<accession>P0C5Z9</accession>
<accession>P0C2H5</accession>
<accession>Q7WRM0</accession>
<accession>Q7X225</accession>